<dbReference type="EMBL" id="AE005674">
    <property type="protein sequence ID" value="AAN42619.2"/>
    <property type="status" value="ALT_INIT"/>
    <property type="molecule type" value="Genomic_DNA"/>
</dbReference>
<dbReference type="EMBL" id="AE014073">
    <property type="protein sequence ID" value="AAP16505.1"/>
    <property type="status" value="ALT_INIT"/>
    <property type="molecule type" value="Genomic_DNA"/>
</dbReference>
<dbReference type="RefSeq" id="NP_706912.2">
    <property type="nucleotide sequence ID" value="NC_004337.2"/>
</dbReference>
<dbReference type="RefSeq" id="WP_000066490.1">
    <property type="nucleotide sequence ID" value="NZ_SUPT01000004.1"/>
</dbReference>
<dbReference type="RefSeq" id="WP_000147279.1">
    <property type="nucleotide sequence ID" value="NZ_CP058853.1"/>
</dbReference>
<dbReference type="SMR" id="P0A981"/>
<dbReference type="STRING" id="198214.SF0991"/>
<dbReference type="PaxDb" id="198214-SF0991"/>
<dbReference type="GeneID" id="1023934"/>
<dbReference type="GeneID" id="93776422"/>
<dbReference type="KEGG" id="sfl:SF0991"/>
<dbReference type="KEGG" id="sfx:S1060"/>
<dbReference type="PATRIC" id="fig|198214.7.peg.1152"/>
<dbReference type="HOGENOM" id="CLU_117621_2_1_6"/>
<dbReference type="Proteomes" id="UP000001006">
    <property type="component" value="Chromosome"/>
</dbReference>
<dbReference type="Proteomes" id="UP000002673">
    <property type="component" value="Chromosome"/>
</dbReference>
<dbReference type="GO" id="GO:0005829">
    <property type="term" value="C:cytosol"/>
    <property type="evidence" value="ECO:0007669"/>
    <property type="project" value="UniProtKB-ARBA"/>
</dbReference>
<dbReference type="GO" id="GO:0003677">
    <property type="term" value="F:DNA binding"/>
    <property type="evidence" value="ECO:0007669"/>
    <property type="project" value="UniProtKB-KW"/>
</dbReference>
<dbReference type="CDD" id="cd04458">
    <property type="entry name" value="CSP_CDS"/>
    <property type="match status" value="1"/>
</dbReference>
<dbReference type="FunFam" id="2.40.50.140:FF:000006">
    <property type="entry name" value="Cold shock protein CspC"/>
    <property type="match status" value="1"/>
</dbReference>
<dbReference type="Gene3D" id="6.20.370.130">
    <property type="match status" value="1"/>
</dbReference>
<dbReference type="Gene3D" id="2.40.50.140">
    <property type="entry name" value="Nucleic acid-binding proteins"/>
    <property type="match status" value="1"/>
</dbReference>
<dbReference type="InterPro" id="IPR012156">
    <property type="entry name" value="Cold_shock_CspA"/>
</dbReference>
<dbReference type="InterPro" id="IPR050181">
    <property type="entry name" value="Cold_shock_domain"/>
</dbReference>
<dbReference type="InterPro" id="IPR011129">
    <property type="entry name" value="CSD"/>
</dbReference>
<dbReference type="InterPro" id="IPR019844">
    <property type="entry name" value="CSD_CS"/>
</dbReference>
<dbReference type="InterPro" id="IPR002059">
    <property type="entry name" value="CSP_DNA-bd"/>
</dbReference>
<dbReference type="InterPro" id="IPR012340">
    <property type="entry name" value="NA-bd_OB-fold"/>
</dbReference>
<dbReference type="NCBIfam" id="NF007378">
    <property type="entry name" value="PRK09890.1"/>
    <property type="match status" value="1"/>
</dbReference>
<dbReference type="NCBIfam" id="NF007679">
    <property type="entry name" value="PRK10354.1"/>
    <property type="match status" value="1"/>
</dbReference>
<dbReference type="PANTHER" id="PTHR11544">
    <property type="entry name" value="COLD SHOCK DOMAIN CONTAINING PROTEINS"/>
    <property type="match status" value="1"/>
</dbReference>
<dbReference type="Pfam" id="PF00313">
    <property type="entry name" value="CSD"/>
    <property type="match status" value="1"/>
</dbReference>
<dbReference type="PIRSF" id="PIRSF002599">
    <property type="entry name" value="Cold_shock_A"/>
    <property type="match status" value="1"/>
</dbReference>
<dbReference type="PRINTS" id="PR00050">
    <property type="entry name" value="COLDSHOCK"/>
</dbReference>
<dbReference type="SMART" id="SM00357">
    <property type="entry name" value="CSP"/>
    <property type="match status" value="1"/>
</dbReference>
<dbReference type="SUPFAM" id="SSF50249">
    <property type="entry name" value="Nucleic acid-binding proteins"/>
    <property type="match status" value="1"/>
</dbReference>
<dbReference type="PROSITE" id="PS00352">
    <property type="entry name" value="CSD_1"/>
    <property type="match status" value="1"/>
</dbReference>
<dbReference type="PROSITE" id="PS51857">
    <property type="entry name" value="CSD_2"/>
    <property type="match status" value="1"/>
</dbReference>
<feature type="chain" id="PRO_0000100265" description="Cold shock-like protein CspG">
    <location>
        <begin position="1"/>
        <end position="70"/>
    </location>
</feature>
<feature type="domain" description="CSD">
    <location>
        <begin position="7"/>
        <end position="67"/>
    </location>
</feature>
<feature type="sequence conflict" description="In Ref. 2; AAP16505." evidence="2" ref="2">
    <original>MS</original>
    <variation>IT</variation>
    <location>
        <begin position="1"/>
        <end position="2"/>
    </location>
</feature>
<sequence length="70" mass="7781">MSNKMTGLVKWFNADKGFGFITPDDGSKDVFVHFTAIQSNEFRTLNENQKVEFSIEQGQRGPAAANVVTL</sequence>
<protein>
    <recommendedName>
        <fullName>Cold shock-like protein CspG</fullName>
        <shortName>CPS-G</shortName>
    </recommendedName>
</protein>
<accession>P0A981</accession>
<accession>Q47130</accession>
<comment type="subcellular location">
    <subcellularLocation>
        <location evidence="1">Cytoplasm</location>
    </subcellularLocation>
</comment>
<comment type="sequence caution" evidence="2">
    <conflict type="erroneous initiation">
        <sequence resource="EMBL-CDS" id="AAN42619"/>
    </conflict>
    <text>Truncated N-terminus.</text>
</comment>
<comment type="sequence caution" evidence="2">
    <conflict type="erroneous initiation">
        <sequence resource="EMBL-CDS" id="AAP16505"/>
    </conflict>
    <text>Truncated N-terminus.</text>
</comment>
<organism>
    <name type="scientific">Shigella flexneri</name>
    <dbReference type="NCBI Taxonomy" id="623"/>
    <lineage>
        <taxon>Bacteria</taxon>
        <taxon>Pseudomonadati</taxon>
        <taxon>Pseudomonadota</taxon>
        <taxon>Gammaproteobacteria</taxon>
        <taxon>Enterobacterales</taxon>
        <taxon>Enterobacteriaceae</taxon>
        <taxon>Shigella</taxon>
    </lineage>
</organism>
<keyword id="KW-0010">Activator</keyword>
<keyword id="KW-0963">Cytoplasm</keyword>
<keyword id="KW-0238">DNA-binding</keyword>
<keyword id="KW-1185">Reference proteome</keyword>
<keyword id="KW-0804">Transcription</keyword>
<keyword id="KW-0805">Transcription regulation</keyword>
<proteinExistence type="inferred from homology"/>
<name>CSPG_SHIFL</name>
<reference key="1">
    <citation type="journal article" date="2002" name="Nucleic Acids Res.">
        <title>Genome sequence of Shigella flexneri 2a: insights into pathogenicity through comparison with genomes of Escherichia coli K12 and O157.</title>
        <authorList>
            <person name="Jin Q."/>
            <person name="Yuan Z."/>
            <person name="Xu J."/>
            <person name="Wang Y."/>
            <person name="Shen Y."/>
            <person name="Lu W."/>
            <person name="Wang J."/>
            <person name="Liu H."/>
            <person name="Yang J."/>
            <person name="Yang F."/>
            <person name="Zhang X."/>
            <person name="Zhang J."/>
            <person name="Yang G."/>
            <person name="Wu H."/>
            <person name="Qu D."/>
            <person name="Dong J."/>
            <person name="Sun L."/>
            <person name="Xue Y."/>
            <person name="Zhao A."/>
            <person name="Gao Y."/>
            <person name="Zhu J."/>
            <person name="Kan B."/>
            <person name="Ding K."/>
            <person name="Chen S."/>
            <person name="Cheng H."/>
            <person name="Yao Z."/>
            <person name="He B."/>
            <person name="Chen R."/>
            <person name="Ma D."/>
            <person name="Qiang B."/>
            <person name="Wen Y."/>
            <person name="Hou Y."/>
            <person name="Yu J."/>
        </authorList>
    </citation>
    <scope>NUCLEOTIDE SEQUENCE [LARGE SCALE GENOMIC DNA]</scope>
    <source>
        <strain>301 / Serotype 2a</strain>
    </source>
</reference>
<reference key="2">
    <citation type="journal article" date="2003" name="Infect. Immun.">
        <title>Complete genome sequence and comparative genomics of Shigella flexneri serotype 2a strain 2457T.</title>
        <authorList>
            <person name="Wei J."/>
            <person name="Goldberg M.B."/>
            <person name="Burland V."/>
            <person name="Venkatesan M.M."/>
            <person name="Deng W."/>
            <person name="Fournier G."/>
            <person name="Mayhew G.F."/>
            <person name="Plunkett G. III"/>
            <person name="Rose D.J."/>
            <person name="Darling A."/>
            <person name="Mau B."/>
            <person name="Perna N.T."/>
            <person name="Payne S.M."/>
            <person name="Runyen-Janecky L.J."/>
            <person name="Zhou S."/>
            <person name="Schwartz D.C."/>
            <person name="Blattner F.R."/>
        </authorList>
    </citation>
    <scope>NUCLEOTIDE SEQUENCE [LARGE SCALE GENOMIC DNA]</scope>
    <source>
        <strain>ATCC 700930 / 2457T / Serotype 2a</strain>
    </source>
</reference>
<evidence type="ECO:0000250" key="1"/>
<evidence type="ECO:0000305" key="2"/>
<gene>
    <name type="primary">cspG</name>
    <name type="ordered locus">SF0991</name>
    <name type="ordered locus">S1060</name>
</gene>